<accession>A7I2M4</accession>
<protein>
    <recommendedName>
        <fullName evidence="1">3-dehydroquinate dehydratase</fullName>
        <shortName evidence="1">3-dehydroquinase</shortName>
        <ecNumber evidence="1">4.2.1.10</ecNumber>
    </recommendedName>
    <alternativeName>
        <fullName evidence="1">Type II DHQase</fullName>
    </alternativeName>
</protein>
<evidence type="ECO:0000255" key="1">
    <source>
        <dbReference type="HAMAP-Rule" id="MF_00169"/>
    </source>
</evidence>
<dbReference type="EC" id="4.2.1.10" evidence="1"/>
<dbReference type="EMBL" id="CP000776">
    <property type="protein sequence ID" value="ABS52557.1"/>
    <property type="molecule type" value="Genomic_DNA"/>
</dbReference>
<dbReference type="RefSeq" id="WP_012109066.1">
    <property type="nucleotide sequence ID" value="NC_009714.1"/>
</dbReference>
<dbReference type="SMR" id="A7I2M4"/>
<dbReference type="STRING" id="360107.CHAB381_1211"/>
<dbReference type="KEGG" id="cha:CHAB381_1211"/>
<dbReference type="eggNOG" id="COG0757">
    <property type="taxonomic scope" value="Bacteria"/>
</dbReference>
<dbReference type="HOGENOM" id="CLU_090968_1_0_7"/>
<dbReference type="OrthoDB" id="9790793at2"/>
<dbReference type="UniPathway" id="UPA00053">
    <property type="reaction ID" value="UER00086"/>
</dbReference>
<dbReference type="Proteomes" id="UP000002407">
    <property type="component" value="Chromosome"/>
</dbReference>
<dbReference type="GO" id="GO:0003855">
    <property type="term" value="F:3-dehydroquinate dehydratase activity"/>
    <property type="evidence" value="ECO:0007669"/>
    <property type="project" value="UniProtKB-UniRule"/>
</dbReference>
<dbReference type="GO" id="GO:0008652">
    <property type="term" value="P:amino acid biosynthetic process"/>
    <property type="evidence" value="ECO:0007669"/>
    <property type="project" value="UniProtKB-KW"/>
</dbReference>
<dbReference type="GO" id="GO:0009073">
    <property type="term" value="P:aromatic amino acid family biosynthetic process"/>
    <property type="evidence" value="ECO:0007669"/>
    <property type="project" value="UniProtKB-KW"/>
</dbReference>
<dbReference type="GO" id="GO:0009423">
    <property type="term" value="P:chorismate biosynthetic process"/>
    <property type="evidence" value="ECO:0007669"/>
    <property type="project" value="UniProtKB-UniRule"/>
</dbReference>
<dbReference type="GO" id="GO:0019631">
    <property type="term" value="P:quinate catabolic process"/>
    <property type="evidence" value="ECO:0007669"/>
    <property type="project" value="TreeGrafter"/>
</dbReference>
<dbReference type="CDD" id="cd00466">
    <property type="entry name" value="DHQase_II"/>
    <property type="match status" value="1"/>
</dbReference>
<dbReference type="Gene3D" id="3.40.50.9100">
    <property type="entry name" value="Dehydroquinase, class II"/>
    <property type="match status" value="1"/>
</dbReference>
<dbReference type="HAMAP" id="MF_00169">
    <property type="entry name" value="AroQ"/>
    <property type="match status" value="1"/>
</dbReference>
<dbReference type="InterPro" id="IPR001874">
    <property type="entry name" value="DHquinase_II"/>
</dbReference>
<dbReference type="InterPro" id="IPR018509">
    <property type="entry name" value="DHquinase_II_CS"/>
</dbReference>
<dbReference type="InterPro" id="IPR036441">
    <property type="entry name" value="DHquinase_II_sf"/>
</dbReference>
<dbReference type="NCBIfam" id="TIGR01088">
    <property type="entry name" value="aroQ"/>
    <property type="match status" value="1"/>
</dbReference>
<dbReference type="NCBIfam" id="NF003805">
    <property type="entry name" value="PRK05395.1-2"/>
    <property type="match status" value="1"/>
</dbReference>
<dbReference type="NCBIfam" id="NF003806">
    <property type="entry name" value="PRK05395.1-3"/>
    <property type="match status" value="1"/>
</dbReference>
<dbReference type="NCBIfam" id="NF003807">
    <property type="entry name" value="PRK05395.1-4"/>
    <property type="match status" value="1"/>
</dbReference>
<dbReference type="PANTHER" id="PTHR21272">
    <property type="entry name" value="CATABOLIC 3-DEHYDROQUINASE"/>
    <property type="match status" value="1"/>
</dbReference>
<dbReference type="PANTHER" id="PTHR21272:SF3">
    <property type="entry name" value="CATABOLIC 3-DEHYDROQUINASE"/>
    <property type="match status" value="1"/>
</dbReference>
<dbReference type="Pfam" id="PF01220">
    <property type="entry name" value="DHquinase_II"/>
    <property type="match status" value="1"/>
</dbReference>
<dbReference type="PIRSF" id="PIRSF001399">
    <property type="entry name" value="DHquinase_II"/>
    <property type="match status" value="1"/>
</dbReference>
<dbReference type="SUPFAM" id="SSF52304">
    <property type="entry name" value="Type II 3-dehydroquinate dehydratase"/>
    <property type="match status" value="1"/>
</dbReference>
<dbReference type="PROSITE" id="PS01029">
    <property type="entry name" value="DEHYDROQUINASE_II"/>
    <property type="match status" value="1"/>
</dbReference>
<feature type="chain" id="PRO_1000023456" description="3-dehydroquinate dehydratase">
    <location>
        <begin position="1"/>
        <end position="155"/>
    </location>
</feature>
<feature type="active site" description="Proton acceptor" evidence="1">
    <location>
        <position position="22"/>
    </location>
</feature>
<feature type="active site" description="Proton donor" evidence="1">
    <location>
        <position position="99"/>
    </location>
</feature>
<feature type="binding site" evidence="1">
    <location>
        <position position="73"/>
    </location>
    <ligand>
        <name>substrate</name>
    </ligand>
</feature>
<feature type="binding site" evidence="1">
    <location>
        <position position="79"/>
    </location>
    <ligand>
        <name>substrate</name>
    </ligand>
</feature>
<feature type="binding site" evidence="1">
    <location>
        <position position="86"/>
    </location>
    <ligand>
        <name>substrate</name>
    </ligand>
</feature>
<feature type="binding site" evidence="1">
    <location>
        <begin position="100"/>
        <end position="101"/>
    </location>
    <ligand>
        <name>substrate</name>
    </ligand>
</feature>
<feature type="binding site" evidence="1">
    <location>
        <position position="110"/>
    </location>
    <ligand>
        <name>substrate</name>
    </ligand>
</feature>
<feature type="site" description="Transition state stabilizer" evidence="1">
    <location>
        <position position="17"/>
    </location>
</feature>
<organism>
    <name type="scientific">Campylobacter hominis (strain ATCC BAA-381 / DSM 21671 / CCUG 45161 / LMG 19568 / NCTC 13146 / CH001A)</name>
    <dbReference type="NCBI Taxonomy" id="360107"/>
    <lineage>
        <taxon>Bacteria</taxon>
        <taxon>Pseudomonadati</taxon>
        <taxon>Campylobacterota</taxon>
        <taxon>Epsilonproteobacteria</taxon>
        <taxon>Campylobacterales</taxon>
        <taxon>Campylobacteraceae</taxon>
        <taxon>Campylobacter</taxon>
    </lineage>
</organism>
<name>AROQ_CAMHC</name>
<comment type="function">
    <text evidence="1">Catalyzes a trans-dehydration via an enolate intermediate.</text>
</comment>
<comment type="catalytic activity">
    <reaction evidence="1">
        <text>3-dehydroquinate = 3-dehydroshikimate + H2O</text>
        <dbReference type="Rhea" id="RHEA:21096"/>
        <dbReference type="ChEBI" id="CHEBI:15377"/>
        <dbReference type="ChEBI" id="CHEBI:16630"/>
        <dbReference type="ChEBI" id="CHEBI:32364"/>
        <dbReference type="EC" id="4.2.1.10"/>
    </reaction>
</comment>
<comment type="pathway">
    <text evidence="1">Metabolic intermediate biosynthesis; chorismate biosynthesis; chorismate from D-erythrose 4-phosphate and phosphoenolpyruvate: step 3/7.</text>
</comment>
<comment type="subunit">
    <text evidence="1">Homododecamer.</text>
</comment>
<comment type="similarity">
    <text evidence="1">Belongs to the type-II 3-dehydroquinase family.</text>
</comment>
<proteinExistence type="inferred from homology"/>
<keyword id="KW-0028">Amino-acid biosynthesis</keyword>
<keyword id="KW-0057">Aromatic amino acid biosynthesis</keyword>
<keyword id="KW-0456">Lyase</keyword>
<keyword id="KW-1185">Reference proteome</keyword>
<sequence length="155" mass="17082">MKIMVIQGPNLNMLGMREPNIYGRMKLEDIHKQMQSVADQAGTEIEFFQSNFEGEIVDKIQECVGTADGIIINPAAYTHTSIAIHDAILAVSLPTIEVHISNPARREDYRKTSLIAPVTAGQIIGFGPIGYHLAMMGMLQIFEQIKAIKTANKGE</sequence>
<reference key="1">
    <citation type="submission" date="2007-07" db="EMBL/GenBank/DDBJ databases">
        <title>Complete genome sequence of Campylobacter hominis ATCC BAA-381, a commensal isolated from the human gastrointestinal tract.</title>
        <authorList>
            <person name="Fouts D.E."/>
            <person name="Mongodin E.F."/>
            <person name="Puiu D."/>
            <person name="Sebastian Y."/>
            <person name="Miller W.G."/>
            <person name="Mandrell R.E."/>
            <person name="Nelson K.E."/>
        </authorList>
    </citation>
    <scope>NUCLEOTIDE SEQUENCE [LARGE SCALE GENOMIC DNA]</scope>
    <source>
        <strain>ATCC BAA-381 / DSM 21671 / CCUG 45161 / LMG 19568 / NCTC 13146 / CH001A</strain>
    </source>
</reference>
<gene>
    <name evidence="1" type="primary">aroQ</name>
    <name type="ordered locus">CHAB381_1211</name>
</gene>